<comment type="similarity">
    <text evidence="1">Belongs to the bacterial ribosomal protein bL33 family.</text>
</comment>
<comment type="sequence caution" evidence="2">
    <conflict type="erroneous initiation">
        <sequence resource="EMBL-CDS" id="ABJ59758"/>
    </conflict>
    <text>Extended N-terminus.</text>
</comment>
<gene>
    <name evidence="1" type="primary">rpmG1</name>
    <name type="ordered locus">LGAS_0353</name>
</gene>
<protein>
    <recommendedName>
        <fullName evidence="1">Large ribosomal subunit protein bL33A</fullName>
    </recommendedName>
    <alternativeName>
        <fullName evidence="1">50S ribosomal protein L33 1</fullName>
    </alternativeName>
</protein>
<reference key="1">
    <citation type="journal article" date="2006" name="Proc. Natl. Acad. Sci. U.S.A.">
        <title>Comparative genomics of the lactic acid bacteria.</title>
        <authorList>
            <person name="Makarova K.S."/>
            <person name="Slesarev A."/>
            <person name="Wolf Y.I."/>
            <person name="Sorokin A."/>
            <person name="Mirkin B."/>
            <person name="Koonin E.V."/>
            <person name="Pavlov A."/>
            <person name="Pavlova N."/>
            <person name="Karamychev V."/>
            <person name="Polouchine N."/>
            <person name="Shakhova V."/>
            <person name="Grigoriev I."/>
            <person name="Lou Y."/>
            <person name="Rohksar D."/>
            <person name="Lucas S."/>
            <person name="Huang K."/>
            <person name="Goodstein D.M."/>
            <person name="Hawkins T."/>
            <person name="Plengvidhya V."/>
            <person name="Welker D."/>
            <person name="Hughes J."/>
            <person name="Goh Y."/>
            <person name="Benson A."/>
            <person name="Baldwin K."/>
            <person name="Lee J.-H."/>
            <person name="Diaz-Muniz I."/>
            <person name="Dosti B."/>
            <person name="Smeianov V."/>
            <person name="Wechter W."/>
            <person name="Barabote R."/>
            <person name="Lorca G."/>
            <person name="Altermann E."/>
            <person name="Barrangou R."/>
            <person name="Ganesan B."/>
            <person name="Xie Y."/>
            <person name="Rawsthorne H."/>
            <person name="Tamir D."/>
            <person name="Parker C."/>
            <person name="Breidt F."/>
            <person name="Broadbent J.R."/>
            <person name="Hutkins R."/>
            <person name="O'Sullivan D."/>
            <person name="Steele J."/>
            <person name="Unlu G."/>
            <person name="Saier M.H. Jr."/>
            <person name="Klaenhammer T."/>
            <person name="Richardson P."/>
            <person name="Kozyavkin S."/>
            <person name="Weimer B.C."/>
            <person name="Mills D.A."/>
        </authorList>
    </citation>
    <scope>NUCLEOTIDE SEQUENCE [LARGE SCALE GENOMIC DNA]</scope>
    <source>
        <strain>ATCC 33323 / DSM 20243 / BCRC 14619 / CIP 102991 / JCM 1131 / KCTC 3163 / NCIMB 11718 / NCTC 13722 / AM63</strain>
    </source>
</reference>
<name>RL331_LACGA</name>
<feature type="chain" id="PRO_0000356504" description="Large ribosomal subunit protein bL33A">
    <location>
        <begin position="1"/>
        <end position="49"/>
    </location>
</feature>
<organism>
    <name type="scientific">Lactobacillus gasseri (strain ATCC 33323 / DSM 20243 / BCRC 14619 / CIP 102991 / JCM 1131 / KCTC 3163 / NCIMB 11718 / NCTC 13722 / AM63)</name>
    <dbReference type="NCBI Taxonomy" id="324831"/>
    <lineage>
        <taxon>Bacteria</taxon>
        <taxon>Bacillati</taxon>
        <taxon>Bacillota</taxon>
        <taxon>Bacilli</taxon>
        <taxon>Lactobacillales</taxon>
        <taxon>Lactobacillaceae</taxon>
        <taxon>Lactobacillus</taxon>
    </lineage>
</organism>
<dbReference type="EMBL" id="CP000413">
    <property type="protein sequence ID" value="ABJ59758.1"/>
    <property type="status" value="ALT_INIT"/>
    <property type="molecule type" value="Genomic_DNA"/>
</dbReference>
<dbReference type="SMR" id="Q045W4"/>
<dbReference type="KEGG" id="lga:LGAS_0353"/>
<dbReference type="HOGENOM" id="CLU_190949_0_1_9"/>
<dbReference type="BioCyc" id="LGAS324831:G1G6Y-351-MONOMER"/>
<dbReference type="Proteomes" id="UP000000664">
    <property type="component" value="Chromosome"/>
</dbReference>
<dbReference type="GO" id="GO:0005737">
    <property type="term" value="C:cytoplasm"/>
    <property type="evidence" value="ECO:0007669"/>
    <property type="project" value="UniProtKB-ARBA"/>
</dbReference>
<dbReference type="GO" id="GO:1990904">
    <property type="term" value="C:ribonucleoprotein complex"/>
    <property type="evidence" value="ECO:0007669"/>
    <property type="project" value="UniProtKB-KW"/>
</dbReference>
<dbReference type="GO" id="GO:0005840">
    <property type="term" value="C:ribosome"/>
    <property type="evidence" value="ECO:0007669"/>
    <property type="project" value="UniProtKB-KW"/>
</dbReference>
<dbReference type="GO" id="GO:0003735">
    <property type="term" value="F:structural constituent of ribosome"/>
    <property type="evidence" value="ECO:0007669"/>
    <property type="project" value="InterPro"/>
</dbReference>
<dbReference type="GO" id="GO:0006412">
    <property type="term" value="P:translation"/>
    <property type="evidence" value="ECO:0007669"/>
    <property type="project" value="UniProtKB-UniRule"/>
</dbReference>
<dbReference type="Gene3D" id="2.20.28.120">
    <property type="entry name" value="Ribosomal protein L33"/>
    <property type="match status" value="1"/>
</dbReference>
<dbReference type="HAMAP" id="MF_00294">
    <property type="entry name" value="Ribosomal_bL33"/>
    <property type="match status" value="1"/>
</dbReference>
<dbReference type="InterPro" id="IPR001705">
    <property type="entry name" value="Ribosomal_bL33"/>
</dbReference>
<dbReference type="InterPro" id="IPR038584">
    <property type="entry name" value="Ribosomal_bL33_sf"/>
</dbReference>
<dbReference type="InterPro" id="IPR011332">
    <property type="entry name" value="Ribosomal_zn-bd"/>
</dbReference>
<dbReference type="NCBIfam" id="NF001764">
    <property type="entry name" value="PRK00504.1"/>
    <property type="match status" value="1"/>
</dbReference>
<dbReference type="NCBIfam" id="TIGR01023">
    <property type="entry name" value="rpmG_bact"/>
    <property type="match status" value="1"/>
</dbReference>
<dbReference type="Pfam" id="PF00471">
    <property type="entry name" value="Ribosomal_L33"/>
    <property type="match status" value="1"/>
</dbReference>
<dbReference type="SUPFAM" id="SSF57829">
    <property type="entry name" value="Zn-binding ribosomal proteins"/>
    <property type="match status" value="1"/>
</dbReference>
<accession>Q045W4</accession>
<evidence type="ECO:0000255" key="1">
    <source>
        <dbReference type="HAMAP-Rule" id="MF_00294"/>
    </source>
</evidence>
<evidence type="ECO:0000305" key="2"/>
<sequence>MAVKKAALACTVCGSRNYSIAASKNRTQRLELKKFCKHCGKQTLHKETR</sequence>
<proteinExistence type="inferred from homology"/>
<keyword id="KW-0687">Ribonucleoprotein</keyword>
<keyword id="KW-0689">Ribosomal protein</keyword>